<keyword id="KW-0008">Acetylcholine receptor inhibiting toxin</keyword>
<keyword id="KW-1015">Disulfide bond</keyword>
<keyword id="KW-0872">Ion channel impairing toxin</keyword>
<keyword id="KW-0528">Neurotoxin</keyword>
<keyword id="KW-0629">Postsynaptic neurotoxin</keyword>
<keyword id="KW-0964">Secreted</keyword>
<keyword id="KW-0732">Signal</keyword>
<keyword id="KW-0800">Toxin</keyword>
<sequence>MKTLLLTLVVVTIVCLDLGYTMTCCNQQSSQPKTTTNCAESSCYKKTWSDHRGTRIERGCGCPQVKHGIKLECCHTNECNN</sequence>
<comment type="function">
    <text evidence="3">Binds to muscle nicotinic acetylcholine receptor (nAChR) and inhibit acetylcholine from binding to the receptor, thereby impairing neuromuscular transmission.</text>
</comment>
<comment type="subcellular location">
    <subcellularLocation>
        <location evidence="1">Secreted</location>
    </subcellularLocation>
</comment>
<comment type="tissue specificity">
    <text evidence="6">Expressed by the venom gland.</text>
</comment>
<comment type="toxic dose">
    <text evidence="5">LD(50) is 0.3467 mg/kg by intraperitoneal injection into mice.</text>
</comment>
<comment type="similarity">
    <text evidence="6">Belongs to the three-finger toxin family. Short-chain subfamily. Type I alpha-neurotoxin sub-subfamily.</text>
</comment>
<organism>
    <name type="scientific">Hydrophis hardwickii</name>
    <name type="common">Hardwick's spine-bellied seasnake</name>
    <name type="synonym">Lapemis hardwickii</name>
    <dbReference type="NCBI Taxonomy" id="8781"/>
    <lineage>
        <taxon>Eukaryota</taxon>
        <taxon>Metazoa</taxon>
        <taxon>Chordata</taxon>
        <taxon>Craniata</taxon>
        <taxon>Vertebrata</taxon>
        <taxon>Euteleostomi</taxon>
        <taxon>Lepidosauria</taxon>
        <taxon>Squamata</taxon>
        <taxon>Bifurcata</taxon>
        <taxon>Unidentata</taxon>
        <taxon>Episquamata</taxon>
        <taxon>Toxicofera</taxon>
        <taxon>Serpentes</taxon>
        <taxon>Colubroidea</taxon>
        <taxon>Elapidae</taxon>
        <taxon>Hydrophiinae</taxon>
        <taxon>Hydrophis</taxon>
    </lineage>
</organism>
<protein>
    <recommendedName>
        <fullName>Short neurotoxin 2</fullName>
    </recommendedName>
    <alternativeName>
        <fullName>SN36</fullName>
    </alternativeName>
</protein>
<feature type="signal peptide" evidence="4">
    <location>
        <begin position="1"/>
        <end position="21"/>
    </location>
</feature>
<feature type="chain" id="PRO_0000316172" description="Short neurotoxin 2">
    <location>
        <begin position="22"/>
        <end position="81"/>
    </location>
</feature>
<feature type="disulfide bond" evidence="2">
    <location>
        <begin position="24"/>
        <end position="43"/>
    </location>
</feature>
<feature type="disulfide bond" evidence="2">
    <location>
        <begin position="38"/>
        <end position="60"/>
    </location>
</feature>
<feature type="disulfide bond" evidence="2">
    <location>
        <begin position="62"/>
        <end position="73"/>
    </location>
</feature>
<feature type="disulfide bond" evidence="2">
    <location>
        <begin position="74"/>
        <end position="79"/>
    </location>
</feature>
<evidence type="ECO:0000250" key="1"/>
<evidence type="ECO:0000250" key="2">
    <source>
        <dbReference type="UniProtKB" id="P0C1Z0"/>
    </source>
</evidence>
<evidence type="ECO:0000250" key="3">
    <source>
        <dbReference type="UniProtKB" id="P60775"/>
    </source>
</evidence>
<evidence type="ECO:0000255" key="4"/>
<evidence type="ECO:0000269" key="5">
    <source>
    </source>
</evidence>
<evidence type="ECO:0000305" key="6"/>
<name>3S12_HYDHA</name>
<dbReference type="EMBL" id="AF159540">
    <property type="protein sequence ID" value="AAL54895.1"/>
    <property type="molecule type" value="mRNA"/>
</dbReference>
<dbReference type="SMR" id="Q8UW26"/>
<dbReference type="GO" id="GO:0005576">
    <property type="term" value="C:extracellular region"/>
    <property type="evidence" value="ECO:0007669"/>
    <property type="project" value="UniProtKB-SubCell"/>
</dbReference>
<dbReference type="GO" id="GO:0030550">
    <property type="term" value="F:acetylcholine receptor inhibitor activity"/>
    <property type="evidence" value="ECO:0007669"/>
    <property type="project" value="UniProtKB-KW"/>
</dbReference>
<dbReference type="GO" id="GO:0099106">
    <property type="term" value="F:ion channel regulator activity"/>
    <property type="evidence" value="ECO:0007669"/>
    <property type="project" value="UniProtKB-KW"/>
</dbReference>
<dbReference type="GO" id="GO:0090729">
    <property type="term" value="F:toxin activity"/>
    <property type="evidence" value="ECO:0007669"/>
    <property type="project" value="UniProtKB-KW"/>
</dbReference>
<dbReference type="CDD" id="cd00206">
    <property type="entry name" value="TFP_snake_toxin"/>
    <property type="match status" value="1"/>
</dbReference>
<dbReference type="Gene3D" id="2.10.60.10">
    <property type="entry name" value="CD59"/>
    <property type="match status" value="1"/>
</dbReference>
<dbReference type="InterPro" id="IPR003571">
    <property type="entry name" value="Snake_3FTx"/>
</dbReference>
<dbReference type="InterPro" id="IPR045860">
    <property type="entry name" value="Snake_toxin-like_sf"/>
</dbReference>
<dbReference type="InterPro" id="IPR018354">
    <property type="entry name" value="Snake_toxin_con_site"/>
</dbReference>
<dbReference type="InterPro" id="IPR054131">
    <property type="entry name" value="Toxin_cobra-type"/>
</dbReference>
<dbReference type="Pfam" id="PF21947">
    <property type="entry name" value="Toxin_cobra-type"/>
    <property type="match status" value="1"/>
</dbReference>
<dbReference type="SUPFAM" id="SSF57302">
    <property type="entry name" value="Snake toxin-like"/>
    <property type="match status" value="1"/>
</dbReference>
<dbReference type="PROSITE" id="PS00272">
    <property type="entry name" value="SNAKE_TOXIN"/>
    <property type="match status" value="1"/>
</dbReference>
<accession>Q8UW26</accession>
<reference key="1">
    <citation type="journal article" date="2001" name="Sheng Wu Hua Xue Yu Sheng Wu Wu Li Xue Bao">
        <title>Identification and functional characterization of three postsynaptic short-chain neurotoxins from hydrophiinae, Lapemis hardwickii Gray.</title>
        <authorList>
            <person name="Zhong X.F."/>
            <person name="Peng L.S."/>
            <person name="Wu W.Y."/>
            <person name="Wei J.W."/>
            <person name="Yang H."/>
            <person name="Yang Y.Z."/>
            <person name="Xu A.L."/>
        </authorList>
    </citation>
    <scope>NUCLEOTIDE SEQUENCE [MRNA]</scope>
    <scope>TOXIC DOSE</scope>
    <source>
        <tissue>Venom gland</tissue>
    </source>
</reference>
<proteinExistence type="inferred from homology"/>